<feature type="chain" id="PRO_1000204665" description="Probable porphobilinogen deaminase">
    <location>
        <begin position="1"/>
        <end position="293"/>
    </location>
</feature>
<feature type="modified residue" description="S-(dipyrrolylmethanemethyl)cysteine" evidence="1">
    <location>
        <position position="233"/>
    </location>
</feature>
<keyword id="KW-0627">Porphyrin biosynthesis</keyword>
<keyword id="KW-0808">Transferase</keyword>
<name>HEM3_SACI4</name>
<evidence type="ECO:0000255" key="1">
    <source>
        <dbReference type="HAMAP-Rule" id="MF_00260"/>
    </source>
</evidence>
<dbReference type="EC" id="2.5.1.61" evidence="1"/>
<dbReference type="EMBL" id="CP001400">
    <property type="protein sequence ID" value="ACP38696.1"/>
    <property type="molecule type" value="Genomic_DNA"/>
</dbReference>
<dbReference type="RefSeq" id="WP_012711923.1">
    <property type="nucleotide sequence ID" value="NC_012588.1"/>
</dbReference>
<dbReference type="SMR" id="C3MYD9"/>
<dbReference type="GeneID" id="84059306"/>
<dbReference type="KEGG" id="sia:M1425_1952"/>
<dbReference type="HOGENOM" id="CLU_019704_1_0_2"/>
<dbReference type="UniPathway" id="UPA00251">
    <property type="reaction ID" value="UER00319"/>
</dbReference>
<dbReference type="Proteomes" id="UP000001350">
    <property type="component" value="Chromosome"/>
</dbReference>
<dbReference type="GO" id="GO:0005737">
    <property type="term" value="C:cytoplasm"/>
    <property type="evidence" value="ECO:0007669"/>
    <property type="project" value="TreeGrafter"/>
</dbReference>
<dbReference type="GO" id="GO:0004418">
    <property type="term" value="F:hydroxymethylbilane synthase activity"/>
    <property type="evidence" value="ECO:0007669"/>
    <property type="project" value="UniProtKB-UniRule"/>
</dbReference>
<dbReference type="GO" id="GO:0006782">
    <property type="term" value="P:protoporphyrinogen IX biosynthetic process"/>
    <property type="evidence" value="ECO:0007669"/>
    <property type="project" value="UniProtKB-UniRule"/>
</dbReference>
<dbReference type="CDD" id="cd13644">
    <property type="entry name" value="PBP2_HemC_archaea"/>
    <property type="match status" value="1"/>
</dbReference>
<dbReference type="Gene3D" id="3.40.190.10">
    <property type="entry name" value="Periplasmic binding protein-like II"/>
    <property type="match status" value="2"/>
</dbReference>
<dbReference type="Gene3D" id="3.30.160.40">
    <property type="entry name" value="Porphobilinogen deaminase, C-terminal domain"/>
    <property type="match status" value="1"/>
</dbReference>
<dbReference type="HAMAP" id="MF_00260">
    <property type="entry name" value="Porphobil_deam"/>
    <property type="match status" value="1"/>
</dbReference>
<dbReference type="InterPro" id="IPR000860">
    <property type="entry name" value="HemC"/>
</dbReference>
<dbReference type="InterPro" id="IPR022419">
    <property type="entry name" value="Porphobilin_deaminase_cofac_BS"/>
</dbReference>
<dbReference type="InterPro" id="IPR022417">
    <property type="entry name" value="Porphobilin_deaminase_N"/>
</dbReference>
<dbReference type="InterPro" id="IPR022418">
    <property type="entry name" value="Porphobilinogen_deaminase_C"/>
</dbReference>
<dbReference type="InterPro" id="IPR036803">
    <property type="entry name" value="Porphobilinogen_deaminase_C_sf"/>
</dbReference>
<dbReference type="NCBIfam" id="TIGR00212">
    <property type="entry name" value="hemC"/>
    <property type="match status" value="1"/>
</dbReference>
<dbReference type="PANTHER" id="PTHR11557">
    <property type="entry name" value="PORPHOBILINOGEN DEAMINASE"/>
    <property type="match status" value="1"/>
</dbReference>
<dbReference type="PANTHER" id="PTHR11557:SF0">
    <property type="entry name" value="PORPHOBILINOGEN DEAMINASE"/>
    <property type="match status" value="1"/>
</dbReference>
<dbReference type="Pfam" id="PF01379">
    <property type="entry name" value="Porphobil_deam"/>
    <property type="match status" value="1"/>
</dbReference>
<dbReference type="Pfam" id="PF03900">
    <property type="entry name" value="Porphobil_deamC"/>
    <property type="match status" value="1"/>
</dbReference>
<dbReference type="PIRSF" id="PIRSF001438">
    <property type="entry name" value="4pyrrol_synth_OHMeBilane_synth"/>
    <property type="match status" value="1"/>
</dbReference>
<dbReference type="PRINTS" id="PR00151">
    <property type="entry name" value="PORPHBDMNASE"/>
</dbReference>
<dbReference type="SUPFAM" id="SSF53850">
    <property type="entry name" value="Periplasmic binding protein-like II"/>
    <property type="match status" value="1"/>
</dbReference>
<dbReference type="SUPFAM" id="SSF54782">
    <property type="entry name" value="Porphobilinogen deaminase (hydroxymethylbilane synthase), C-terminal domain"/>
    <property type="match status" value="1"/>
</dbReference>
<dbReference type="PROSITE" id="PS00533">
    <property type="entry name" value="PORPHOBILINOGEN_DEAM"/>
    <property type="match status" value="1"/>
</dbReference>
<gene>
    <name evidence="1" type="primary">hemC</name>
    <name type="ordered locus">M1425_1952</name>
</gene>
<accession>C3MYD9</accession>
<comment type="function">
    <text evidence="1">Tetrapolymerization of the monopyrrole PBG into the hydroxymethylbilane pre-uroporphyrinogen in several discrete steps.</text>
</comment>
<comment type="catalytic activity">
    <reaction evidence="1">
        <text>4 porphobilinogen + H2O = hydroxymethylbilane + 4 NH4(+)</text>
        <dbReference type="Rhea" id="RHEA:13185"/>
        <dbReference type="ChEBI" id="CHEBI:15377"/>
        <dbReference type="ChEBI" id="CHEBI:28938"/>
        <dbReference type="ChEBI" id="CHEBI:57845"/>
        <dbReference type="ChEBI" id="CHEBI:58126"/>
        <dbReference type="EC" id="2.5.1.61"/>
    </reaction>
</comment>
<comment type="cofactor">
    <cofactor evidence="1">
        <name>dipyrromethane</name>
        <dbReference type="ChEBI" id="CHEBI:60342"/>
    </cofactor>
    <text evidence="1">Binds 1 dipyrromethane group covalently.</text>
</comment>
<comment type="pathway">
    <text evidence="1">Porphyrin-containing compound metabolism; protoporphyrin-IX biosynthesis; coproporphyrinogen-III from 5-aminolevulinate: step 2/4.</text>
</comment>
<comment type="miscellaneous">
    <text evidence="1">The porphobilinogen subunits are added to the dipyrromethane group.</text>
</comment>
<comment type="similarity">
    <text evidence="1">Belongs to the HMBS family.</text>
</comment>
<organism>
    <name type="scientific">Saccharolobus islandicus (strain M.14.25 / Kamchatka #1)</name>
    <name type="common">Sulfolobus islandicus</name>
    <dbReference type="NCBI Taxonomy" id="427317"/>
    <lineage>
        <taxon>Archaea</taxon>
        <taxon>Thermoproteota</taxon>
        <taxon>Thermoprotei</taxon>
        <taxon>Sulfolobales</taxon>
        <taxon>Sulfolobaceae</taxon>
        <taxon>Saccharolobus</taxon>
    </lineage>
</organism>
<sequence length="293" mass="32938">MKIRIAARGSKLSRIQVDMLGEKLKKIGIEYEIIDIKTKADLFSTEPLSKLGKGVFEKEVNEAVLEGKADIAVHSMKDILSEINPSLEIFAVLERDPPYDILIAEKNLDKLDSNITIGTSSIRRKNFLKYIKPEINTKDIRGNVDTRIRKYLSKEYQGLILAEASLKRLNMTMNYHRLNVYDFTPEANQGIIVALGRKKDEKIKEIFKEINHKDTLDEALAERAVISLVGGGCHSPIGVLFKKEGKEFYGIASYSDGKKKITVSISKPGDPYTIGSELGLLLKKEMKNENIIP</sequence>
<protein>
    <recommendedName>
        <fullName evidence="1">Probable porphobilinogen deaminase</fullName>
        <shortName evidence="1">PBG</shortName>
        <ecNumber evidence="1">2.5.1.61</ecNumber>
    </recommendedName>
    <alternativeName>
        <fullName evidence="1">Hydroxymethylbilane synthase</fullName>
        <shortName evidence="1">HMBS</shortName>
    </alternativeName>
    <alternativeName>
        <fullName evidence="1">Pre-uroporphyrinogen synthase</fullName>
    </alternativeName>
</protein>
<proteinExistence type="inferred from homology"/>
<reference key="1">
    <citation type="journal article" date="2009" name="Proc. Natl. Acad. Sci. U.S.A.">
        <title>Biogeography of the Sulfolobus islandicus pan-genome.</title>
        <authorList>
            <person name="Reno M.L."/>
            <person name="Held N.L."/>
            <person name="Fields C.J."/>
            <person name="Burke P.V."/>
            <person name="Whitaker R.J."/>
        </authorList>
    </citation>
    <scope>NUCLEOTIDE SEQUENCE [LARGE SCALE GENOMIC DNA]</scope>
    <source>
        <strain>M.14.25 / Kamchatka #1</strain>
    </source>
</reference>